<evidence type="ECO:0000250" key="1"/>
<evidence type="ECO:0000255" key="2"/>
<evidence type="ECO:0000305" key="3"/>
<gene>
    <name type="primary">BDNF</name>
</gene>
<organism>
    <name type="scientific">Acrochordus javanicus</name>
    <name type="common">Javan wart snake</name>
    <dbReference type="NCBI Taxonomy" id="39267"/>
    <lineage>
        <taxon>Eukaryota</taxon>
        <taxon>Metazoa</taxon>
        <taxon>Chordata</taxon>
        <taxon>Craniata</taxon>
        <taxon>Vertebrata</taxon>
        <taxon>Euteleostomi</taxon>
        <taxon>Lepidosauria</taxon>
        <taxon>Squamata</taxon>
        <taxon>Bifurcata</taxon>
        <taxon>Unidentata</taxon>
        <taxon>Episquamata</taxon>
        <taxon>Toxicofera</taxon>
        <taxon>Serpentes</taxon>
        <taxon>Acrochordoidea</taxon>
        <taxon>Acrochordidae</taxon>
        <taxon>Acrochordus</taxon>
    </lineage>
</organism>
<proteinExistence type="inferred from homology"/>
<dbReference type="EMBL" id="AY988036">
    <property type="protein sequence ID" value="AAY44243.1"/>
    <property type="molecule type" value="Genomic_DNA"/>
</dbReference>
<dbReference type="SMR" id="Q1X702"/>
<dbReference type="GlyCosmos" id="Q1X702">
    <property type="glycosylation" value="1 site, No reported glycans"/>
</dbReference>
<dbReference type="GO" id="GO:0030424">
    <property type="term" value="C:axon"/>
    <property type="evidence" value="ECO:0007669"/>
    <property type="project" value="TreeGrafter"/>
</dbReference>
<dbReference type="GO" id="GO:0030425">
    <property type="term" value="C:dendrite"/>
    <property type="evidence" value="ECO:0007669"/>
    <property type="project" value="TreeGrafter"/>
</dbReference>
<dbReference type="GO" id="GO:0005615">
    <property type="term" value="C:extracellular space"/>
    <property type="evidence" value="ECO:0007669"/>
    <property type="project" value="TreeGrafter"/>
</dbReference>
<dbReference type="GO" id="GO:0008021">
    <property type="term" value="C:synaptic vesicle"/>
    <property type="evidence" value="ECO:0007669"/>
    <property type="project" value="TreeGrafter"/>
</dbReference>
<dbReference type="GO" id="GO:0008083">
    <property type="term" value="F:growth factor activity"/>
    <property type="evidence" value="ECO:0007669"/>
    <property type="project" value="UniProtKB-KW"/>
</dbReference>
<dbReference type="GO" id="GO:0005163">
    <property type="term" value="F:nerve growth factor receptor binding"/>
    <property type="evidence" value="ECO:0007669"/>
    <property type="project" value="TreeGrafter"/>
</dbReference>
<dbReference type="GO" id="GO:0007169">
    <property type="term" value="P:cell surface receptor protein tyrosine kinase signaling pathway"/>
    <property type="evidence" value="ECO:0007669"/>
    <property type="project" value="TreeGrafter"/>
</dbReference>
<dbReference type="GO" id="GO:0050804">
    <property type="term" value="P:modulation of chemical synaptic transmission"/>
    <property type="evidence" value="ECO:0007669"/>
    <property type="project" value="TreeGrafter"/>
</dbReference>
<dbReference type="GO" id="GO:0043524">
    <property type="term" value="P:negative regulation of neuron apoptotic process"/>
    <property type="evidence" value="ECO:0007669"/>
    <property type="project" value="TreeGrafter"/>
</dbReference>
<dbReference type="GO" id="GO:0021675">
    <property type="term" value="P:nerve development"/>
    <property type="evidence" value="ECO:0007669"/>
    <property type="project" value="TreeGrafter"/>
</dbReference>
<dbReference type="GO" id="GO:0038180">
    <property type="term" value="P:nerve growth factor signaling pathway"/>
    <property type="evidence" value="ECO:0007669"/>
    <property type="project" value="TreeGrafter"/>
</dbReference>
<dbReference type="GO" id="GO:0048812">
    <property type="term" value="P:neuron projection morphogenesis"/>
    <property type="evidence" value="ECO:0007669"/>
    <property type="project" value="TreeGrafter"/>
</dbReference>
<dbReference type="FunFam" id="2.10.90.10:FF:000002">
    <property type="entry name" value="Brain-derived neurotrophic factor"/>
    <property type="match status" value="1"/>
</dbReference>
<dbReference type="Gene3D" id="2.10.90.10">
    <property type="entry name" value="Cystine-knot cytokines"/>
    <property type="match status" value="1"/>
</dbReference>
<dbReference type="InterPro" id="IPR020430">
    <property type="entry name" value="Brain-der_neurotrophic_factor"/>
</dbReference>
<dbReference type="InterPro" id="IPR029034">
    <property type="entry name" value="Cystine-knot_cytokine"/>
</dbReference>
<dbReference type="InterPro" id="IPR020408">
    <property type="entry name" value="Nerve_growth_factor-like"/>
</dbReference>
<dbReference type="InterPro" id="IPR002072">
    <property type="entry name" value="Nerve_growth_factor-rel"/>
</dbReference>
<dbReference type="InterPro" id="IPR019846">
    <property type="entry name" value="Nerve_growth_factor_CS"/>
</dbReference>
<dbReference type="PANTHER" id="PTHR11589:SF3">
    <property type="entry name" value="BRAIN-DERIVED NEUROTROPHIC FACTOR"/>
    <property type="match status" value="1"/>
</dbReference>
<dbReference type="PANTHER" id="PTHR11589">
    <property type="entry name" value="NERVE GROWTH FACTOR NGF -RELATED"/>
    <property type="match status" value="1"/>
</dbReference>
<dbReference type="Pfam" id="PF00243">
    <property type="entry name" value="NGF"/>
    <property type="match status" value="1"/>
</dbReference>
<dbReference type="PIRSF" id="PIRSF001789">
    <property type="entry name" value="NGF"/>
    <property type="match status" value="1"/>
</dbReference>
<dbReference type="PRINTS" id="PR01912">
    <property type="entry name" value="BDNFACTOR"/>
</dbReference>
<dbReference type="PRINTS" id="PR00268">
    <property type="entry name" value="NGF"/>
</dbReference>
<dbReference type="SMART" id="SM00140">
    <property type="entry name" value="NGF"/>
    <property type="match status" value="1"/>
</dbReference>
<dbReference type="SUPFAM" id="SSF57501">
    <property type="entry name" value="Cystine-knot cytokines"/>
    <property type="match status" value="1"/>
</dbReference>
<dbReference type="PROSITE" id="PS00248">
    <property type="entry name" value="NGF_1"/>
    <property type="match status" value="1"/>
</dbReference>
<dbReference type="PROSITE" id="PS50270">
    <property type="entry name" value="NGF_2"/>
    <property type="match status" value="1"/>
</dbReference>
<keyword id="KW-0165">Cleavage on pair of basic residues</keyword>
<keyword id="KW-1015">Disulfide bond</keyword>
<keyword id="KW-0325">Glycoprotein</keyword>
<keyword id="KW-0339">Growth factor</keyword>
<keyword id="KW-0964">Secreted</keyword>
<keyword id="KW-0732">Signal</keyword>
<feature type="signal peptide" evidence="2">
    <location>
        <begin position="1" status="less than"/>
        <end position="5"/>
    </location>
</feature>
<feature type="propeptide" id="PRO_0000346654" evidence="1">
    <location>
        <begin position="6"/>
        <end position="114"/>
    </location>
</feature>
<feature type="chain" id="PRO_0000346655" description="Neurotrophic factor BDNF">
    <location>
        <begin position="115"/>
        <end position="223" status="greater than"/>
    </location>
</feature>
<feature type="glycosylation site" description="N-linked (GlcNAc...) asparagine" evidence="2">
    <location>
        <position position="107"/>
    </location>
</feature>
<feature type="disulfide bond" evidence="1">
    <location>
        <begin position="127"/>
        <end position="194"/>
    </location>
</feature>
<feature type="disulfide bond" evidence="1">
    <location>
        <begin position="172"/>
        <end position="223"/>
    </location>
</feature>
<feature type="non-terminal residue">
    <location>
        <position position="1"/>
    </location>
</feature>
<feature type="non-terminal residue">
    <location>
        <position position="223"/>
    </location>
</feature>
<accession>Q1X702</accession>
<comment type="function">
    <text evidence="1">Promotes the survival of neuronal populations that are all located either in the central nervous system or directly connected to it.</text>
</comment>
<comment type="subcellular location">
    <subcellularLocation>
        <location evidence="1">Secreted</location>
    </subcellularLocation>
</comment>
<comment type="similarity">
    <text evidence="3">Belongs to the NGF-beta family.</text>
</comment>
<reference key="1">
    <citation type="journal article" date="2006" name="Mol. Phylogenet. Evol.">
        <title>Dispersal and vicariance: the complex evolutionary history of boid snakes.</title>
        <authorList>
            <person name="Noonan B.P."/>
            <person name="Chippindale P.T."/>
        </authorList>
    </citation>
    <scope>NUCLEOTIDE SEQUENCE [GENOMIC DNA]</scope>
</reference>
<name>BDNF_ACRJA</name>
<protein>
    <recommendedName>
        <fullName evidence="3">Neurotrophic factor BDNF precursor form</fullName>
        <shortName>proBDNF</shortName>
    </recommendedName>
    <alternativeName>
        <fullName>Brain-derived neurotrophic factor</fullName>
    </alternativeName>
    <component>
        <recommendedName>
            <fullName>Neurotrophic factor BDNF</fullName>
        </recommendedName>
    </component>
</protein>
<sequence length="223" mass="25061">SCMKAAPMKEISIRGQGSLAYPGLQTQGNLDTLSGPNDATRGLTSLADTFEHVIEELLDEQQVIQPSKENKDADLYSSRVMLSSQVPLEPPLLFLLEEYKNYLDAANMSMRVRRHSDPARRGELSVCDSTSEWVTAAEKKTAVDMSGATVTVLEKVPVPKGQLKQYFYETKCSTKGYAKEGCRGIDKRYWNSQCRTTQSYVRALTMDNKKRVGWRFIRIDTSC</sequence>